<keyword id="KW-0963">Cytoplasm</keyword>
<keyword id="KW-0251">Elongation factor</keyword>
<keyword id="KW-0342">GTP-binding</keyword>
<keyword id="KW-0378">Hydrolase</keyword>
<keyword id="KW-0460">Magnesium</keyword>
<keyword id="KW-0479">Metal-binding</keyword>
<keyword id="KW-0547">Nucleotide-binding</keyword>
<keyword id="KW-0648">Protein biosynthesis</keyword>
<keyword id="KW-1185">Reference proteome</keyword>
<organism>
    <name type="scientific">Clostridium tetani (strain Massachusetts / E88)</name>
    <dbReference type="NCBI Taxonomy" id="212717"/>
    <lineage>
        <taxon>Bacteria</taxon>
        <taxon>Bacillati</taxon>
        <taxon>Bacillota</taxon>
        <taxon>Clostridia</taxon>
        <taxon>Eubacteriales</taxon>
        <taxon>Clostridiaceae</taxon>
        <taxon>Clostridium</taxon>
    </lineage>
</organism>
<reference key="1">
    <citation type="journal article" date="2003" name="Proc. Natl. Acad. Sci. U.S.A.">
        <title>The genome sequence of Clostridium tetani, the causative agent of tetanus disease.</title>
        <authorList>
            <person name="Brueggemann H."/>
            <person name="Baeumer S."/>
            <person name="Fricke W.F."/>
            <person name="Wiezer A."/>
            <person name="Liesegang H."/>
            <person name="Decker I."/>
            <person name="Herzberg C."/>
            <person name="Martinez-Arias R."/>
            <person name="Merkl R."/>
            <person name="Henne A."/>
            <person name="Gottschalk G."/>
        </authorList>
    </citation>
    <scope>NUCLEOTIDE SEQUENCE [LARGE SCALE GENOMIC DNA]</scope>
    <source>
        <strain>Massachusetts / E88</strain>
    </source>
</reference>
<name>EFTU_CLOTE</name>
<protein>
    <recommendedName>
        <fullName evidence="2">Elongation factor Tu</fullName>
        <shortName evidence="2">EF-Tu</shortName>
        <ecNumber evidence="2">3.6.5.3</ecNumber>
    </recommendedName>
</protein>
<comment type="function">
    <text evidence="2">GTP hydrolase that promotes the GTP-dependent binding of aminoacyl-tRNA to the A-site of ribosomes during protein biosynthesis.</text>
</comment>
<comment type="catalytic activity">
    <reaction evidence="2">
        <text>GTP + H2O = GDP + phosphate + H(+)</text>
        <dbReference type="Rhea" id="RHEA:19669"/>
        <dbReference type="ChEBI" id="CHEBI:15377"/>
        <dbReference type="ChEBI" id="CHEBI:15378"/>
        <dbReference type="ChEBI" id="CHEBI:37565"/>
        <dbReference type="ChEBI" id="CHEBI:43474"/>
        <dbReference type="ChEBI" id="CHEBI:58189"/>
        <dbReference type="EC" id="3.6.5.3"/>
    </reaction>
    <physiologicalReaction direction="left-to-right" evidence="2">
        <dbReference type="Rhea" id="RHEA:19670"/>
    </physiologicalReaction>
</comment>
<comment type="subunit">
    <text evidence="2">Monomer.</text>
</comment>
<comment type="subcellular location">
    <subcellularLocation>
        <location evidence="2">Cytoplasm</location>
    </subcellularLocation>
</comment>
<comment type="similarity">
    <text evidence="2">Belongs to the TRAFAC class translation factor GTPase superfamily. Classic translation factor GTPase family. EF-Tu/EF-1A subfamily.</text>
</comment>
<gene>
    <name evidence="2" type="primary">tufA</name>
    <name type="ordered locus">CTC_02602</name>
</gene>
<gene>
    <name evidence="2" type="primary">tufB</name>
    <name type="ordered locus">CTC_02616</name>
</gene>
<accession>Q877L9</accession>
<sequence length="397" mass="43447">MAKEKFERSKPHVNIGTIGHVDHGKTTLTAAITTILGHKGFAKAFKYDEIDKAPEEKERGITISTSHVEYETENRHYAHVDCPGHADYVKNMITGAAQMDGAILVVSAADGPMPQTREHILLASRVGVEHIVVFLNKADQVDDAELIELVEMEVRELMNEYGFPGDDAPVVVGSALKALENPEDDAATQCIMDLMAAVDEYIPTPERATDKPFLMPVEDIFTITGRGTVATGRVERGILKVGDEIEIVGLSDESKKSVITGIEMFRKLLDEAQAGDNIGALLRGVQRDEIQRGQVLAATGSVKPHKSFTGQVYVLKKEEGGRHTPFFNGYRPQFYFRTTDVTGSIALPEGVEMVMPGDHIDMKVELITRVAMDEGLRFAIREGGRTVGSGVVSEITE</sequence>
<proteinExistence type="inferred from homology"/>
<feature type="chain" id="PRO_0000091314" description="Elongation factor Tu">
    <location>
        <begin position="1"/>
        <end position="397"/>
    </location>
</feature>
<feature type="domain" description="tr-type G">
    <location>
        <begin position="10"/>
        <end position="206"/>
    </location>
</feature>
<feature type="region of interest" description="G1" evidence="1">
    <location>
        <begin position="19"/>
        <end position="26"/>
    </location>
</feature>
<feature type="region of interest" description="G2" evidence="1">
    <location>
        <begin position="60"/>
        <end position="64"/>
    </location>
</feature>
<feature type="region of interest" description="G3" evidence="1">
    <location>
        <begin position="81"/>
        <end position="84"/>
    </location>
</feature>
<feature type="region of interest" description="G4" evidence="1">
    <location>
        <begin position="136"/>
        <end position="139"/>
    </location>
</feature>
<feature type="region of interest" description="G5" evidence="1">
    <location>
        <begin position="174"/>
        <end position="176"/>
    </location>
</feature>
<feature type="binding site" evidence="2">
    <location>
        <begin position="19"/>
        <end position="26"/>
    </location>
    <ligand>
        <name>GTP</name>
        <dbReference type="ChEBI" id="CHEBI:37565"/>
    </ligand>
</feature>
<feature type="binding site" evidence="2">
    <location>
        <position position="26"/>
    </location>
    <ligand>
        <name>Mg(2+)</name>
        <dbReference type="ChEBI" id="CHEBI:18420"/>
    </ligand>
</feature>
<feature type="binding site" evidence="2">
    <location>
        <begin position="81"/>
        <end position="85"/>
    </location>
    <ligand>
        <name>GTP</name>
        <dbReference type="ChEBI" id="CHEBI:37565"/>
    </ligand>
</feature>
<feature type="binding site" evidence="2">
    <location>
        <begin position="136"/>
        <end position="139"/>
    </location>
    <ligand>
        <name>GTP</name>
        <dbReference type="ChEBI" id="CHEBI:37565"/>
    </ligand>
</feature>
<dbReference type="EC" id="3.6.5.3" evidence="2"/>
<dbReference type="EMBL" id="AE015927">
    <property type="protein sequence ID" value="AAO37057.1"/>
    <property type="molecule type" value="Genomic_DNA"/>
</dbReference>
<dbReference type="EMBL" id="AE015927">
    <property type="protein sequence ID" value="AAO37067.1"/>
    <property type="molecule type" value="Genomic_DNA"/>
</dbReference>
<dbReference type="SMR" id="Q877L9"/>
<dbReference type="STRING" id="212717.CTC_02602"/>
<dbReference type="GeneID" id="24255073"/>
<dbReference type="KEGG" id="ctc:CTC_02602"/>
<dbReference type="KEGG" id="ctc:CTC_02616"/>
<dbReference type="HOGENOM" id="CLU_007265_0_0_9"/>
<dbReference type="OrthoDB" id="9804504at2"/>
<dbReference type="Proteomes" id="UP000001412">
    <property type="component" value="Chromosome"/>
</dbReference>
<dbReference type="GO" id="GO:0005829">
    <property type="term" value="C:cytosol"/>
    <property type="evidence" value="ECO:0007669"/>
    <property type="project" value="TreeGrafter"/>
</dbReference>
<dbReference type="GO" id="GO:0005525">
    <property type="term" value="F:GTP binding"/>
    <property type="evidence" value="ECO:0007669"/>
    <property type="project" value="UniProtKB-UniRule"/>
</dbReference>
<dbReference type="GO" id="GO:0003924">
    <property type="term" value="F:GTPase activity"/>
    <property type="evidence" value="ECO:0007669"/>
    <property type="project" value="InterPro"/>
</dbReference>
<dbReference type="GO" id="GO:0003746">
    <property type="term" value="F:translation elongation factor activity"/>
    <property type="evidence" value="ECO:0007669"/>
    <property type="project" value="UniProtKB-UniRule"/>
</dbReference>
<dbReference type="CDD" id="cd01884">
    <property type="entry name" value="EF_Tu"/>
    <property type="match status" value="1"/>
</dbReference>
<dbReference type="CDD" id="cd03697">
    <property type="entry name" value="EFTU_II"/>
    <property type="match status" value="1"/>
</dbReference>
<dbReference type="CDD" id="cd03707">
    <property type="entry name" value="EFTU_III"/>
    <property type="match status" value="1"/>
</dbReference>
<dbReference type="FunFam" id="2.40.30.10:FF:000001">
    <property type="entry name" value="Elongation factor Tu"/>
    <property type="match status" value="1"/>
</dbReference>
<dbReference type="FunFam" id="3.40.50.300:FF:000003">
    <property type="entry name" value="Elongation factor Tu"/>
    <property type="match status" value="1"/>
</dbReference>
<dbReference type="Gene3D" id="3.40.50.300">
    <property type="entry name" value="P-loop containing nucleotide triphosphate hydrolases"/>
    <property type="match status" value="1"/>
</dbReference>
<dbReference type="Gene3D" id="2.40.30.10">
    <property type="entry name" value="Translation factors"/>
    <property type="match status" value="2"/>
</dbReference>
<dbReference type="HAMAP" id="MF_00118_B">
    <property type="entry name" value="EF_Tu_B"/>
    <property type="match status" value="1"/>
</dbReference>
<dbReference type="InterPro" id="IPR041709">
    <property type="entry name" value="EF-Tu_GTP-bd"/>
</dbReference>
<dbReference type="InterPro" id="IPR050055">
    <property type="entry name" value="EF-Tu_GTPase"/>
</dbReference>
<dbReference type="InterPro" id="IPR004161">
    <property type="entry name" value="EFTu-like_2"/>
</dbReference>
<dbReference type="InterPro" id="IPR033720">
    <property type="entry name" value="EFTU_2"/>
</dbReference>
<dbReference type="InterPro" id="IPR031157">
    <property type="entry name" value="G_TR_CS"/>
</dbReference>
<dbReference type="InterPro" id="IPR027417">
    <property type="entry name" value="P-loop_NTPase"/>
</dbReference>
<dbReference type="InterPro" id="IPR005225">
    <property type="entry name" value="Small_GTP-bd"/>
</dbReference>
<dbReference type="InterPro" id="IPR000795">
    <property type="entry name" value="T_Tr_GTP-bd_dom"/>
</dbReference>
<dbReference type="InterPro" id="IPR009000">
    <property type="entry name" value="Transl_B-barrel_sf"/>
</dbReference>
<dbReference type="InterPro" id="IPR009001">
    <property type="entry name" value="Transl_elong_EF1A/Init_IF2_C"/>
</dbReference>
<dbReference type="InterPro" id="IPR004541">
    <property type="entry name" value="Transl_elong_EFTu/EF1A_bac/org"/>
</dbReference>
<dbReference type="InterPro" id="IPR004160">
    <property type="entry name" value="Transl_elong_EFTu/EF1A_C"/>
</dbReference>
<dbReference type="NCBIfam" id="TIGR00485">
    <property type="entry name" value="EF-Tu"/>
    <property type="match status" value="1"/>
</dbReference>
<dbReference type="NCBIfam" id="NF000766">
    <property type="entry name" value="PRK00049.1"/>
    <property type="match status" value="1"/>
</dbReference>
<dbReference type="NCBIfam" id="NF009372">
    <property type="entry name" value="PRK12735.1"/>
    <property type="match status" value="1"/>
</dbReference>
<dbReference type="NCBIfam" id="NF009373">
    <property type="entry name" value="PRK12736.1"/>
    <property type="match status" value="1"/>
</dbReference>
<dbReference type="NCBIfam" id="TIGR00231">
    <property type="entry name" value="small_GTP"/>
    <property type="match status" value="1"/>
</dbReference>
<dbReference type="PANTHER" id="PTHR43721:SF22">
    <property type="entry name" value="ELONGATION FACTOR TU, MITOCHONDRIAL"/>
    <property type="match status" value="1"/>
</dbReference>
<dbReference type="PANTHER" id="PTHR43721">
    <property type="entry name" value="ELONGATION FACTOR TU-RELATED"/>
    <property type="match status" value="1"/>
</dbReference>
<dbReference type="Pfam" id="PF00009">
    <property type="entry name" value="GTP_EFTU"/>
    <property type="match status" value="1"/>
</dbReference>
<dbReference type="Pfam" id="PF03144">
    <property type="entry name" value="GTP_EFTU_D2"/>
    <property type="match status" value="1"/>
</dbReference>
<dbReference type="Pfam" id="PF03143">
    <property type="entry name" value="GTP_EFTU_D3"/>
    <property type="match status" value="1"/>
</dbReference>
<dbReference type="PRINTS" id="PR00315">
    <property type="entry name" value="ELONGATNFCT"/>
</dbReference>
<dbReference type="SUPFAM" id="SSF50465">
    <property type="entry name" value="EF-Tu/eEF-1alpha/eIF2-gamma C-terminal domain"/>
    <property type="match status" value="1"/>
</dbReference>
<dbReference type="SUPFAM" id="SSF52540">
    <property type="entry name" value="P-loop containing nucleoside triphosphate hydrolases"/>
    <property type="match status" value="1"/>
</dbReference>
<dbReference type="SUPFAM" id="SSF50447">
    <property type="entry name" value="Translation proteins"/>
    <property type="match status" value="1"/>
</dbReference>
<dbReference type="PROSITE" id="PS00301">
    <property type="entry name" value="G_TR_1"/>
    <property type="match status" value="1"/>
</dbReference>
<dbReference type="PROSITE" id="PS51722">
    <property type="entry name" value="G_TR_2"/>
    <property type="match status" value="1"/>
</dbReference>
<evidence type="ECO:0000250" key="1"/>
<evidence type="ECO:0000255" key="2">
    <source>
        <dbReference type="HAMAP-Rule" id="MF_00118"/>
    </source>
</evidence>